<proteinExistence type="inferred from homology"/>
<sequence length="309" mass="35409">MLEINKDRIKGIVLALKANYYIVQIDTINLIPELFKKKIGDHNFRLLCTKRSRLSYKGHSVSVGDFVLIEAIDWTAETGVISFVEPRKNLITRPPVANVTDVIIVVSLLDPSFDLNQVSRFLMKAEETGLKVTIVLTKRDLIDEKILEKYDKKLQTWGYQPIPISIVNGEGIQKLSARLKSMKLGVLCGPSGVGKSSLINYLLPKISIPIGKLSKKLKRGRHTTRHVELFSIYSDSFIADTPGFNKPEFYTEPSQVPQLFPELRSQLLIKKCKFRNCMHLNEPDCAISRDWERYSNYKNFLQEMLNYHH</sequence>
<name>RSGA_PROMA</name>
<reference key="1">
    <citation type="journal article" date="2003" name="Proc. Natl. Acad. Sci. U.S.A.">
        <title>Genome sequence of the cyanobacterium Prochlorococcus marinus SS120, a nearly minimal oxyphototrophic genome.</title>
        <authorList>
            <person name="Dufresne A."/>
            <person name="Salanoubat M."/>
            <person name="Partensky F."/>
            <person name="Artiguenave F."/>
            <person name="Axmann I.M."/>
            <person name="Barbe V."/>
            <person name="Duprat S."/>
            <person name="Galperin M.Y."/>
            <person name="Koonin E.V."/>
            <person name="Le Gall F."/>
            <person name="Makarova K.S."/>
            <person name="Ostrowski M."/>
            <person name="Oztas S."/>
            <person name="Robert C."/>
            <person name="Rogozin I.B."/>
            <person name="Scanlan D.J."/>
            <person name="Tandeau de Marsac N."/>
            <person name="Weissenbach J."/>
            <person name="Wincker P."/>
            <person name="Wolf Y.I."/>
            <person name="Hess W.R."/>
        </authorList>
    </citation>
    <scope>NUCLEOTIDE SEQUENCE [LARGE SCALE GENOMIC DNA]</scope>
    <source>
        <strain>SARG / CCMP1375 / SS120</strain>
    </source>
</reference>
<gene>
    <name evidence="1" type="primary">rsgA</name>
    <name type="ordered locus">Pro_0019</name>
</gene>
<keyword id="KW-0963">Cytoplasm</keyword>
<keyword id="KW-0342">GTP-binding</keyword>
<keyword id="KW-0378">Hydrolase</keyword>
<keyword id="KW-0479">Metal-binding</keyword>
<keyword id="KW-0547">Nucleotide-binding</keyword>
<keyword id="KW-1185">Reference proteome</keyword>
<keyword id="KW-0690">Ribosome biogenesis</keyword>
<keyword id="KW-0694">RNA-binding</keyword>
<keyword id="KW-0699">rRNA-binding</keyword>
<keyword id="KW-0862">Zinc</keyword>
<evidence type="ECO:0000255" key="1">
    <source>
        <dbReference type="HAMAP-Rule" id="MF_01820"/>
    </source>
</evidence>
<evidence type="ECO:0000255" key="2">
    <source>
        <dbReference type="PROSITE-ProRule" id="PRU01058"/>
    </source>
</evidence>
<organism>
    <name type="scientific">Prochlorococcus marinus (strain SARG / CCMP1375 / SS120)</name>
    <dbReference type="NCBI Taxonomy" id="167539"/>
    <lineage>
        <taxon>Bacteria</taxon>
        <taxon>Bacillati</taxon>
        <taxon>Cyanobacteriota</taxon>
        <taxon>Cyanophyceae</taxon>
        <taxon>Synechococcales</taxon>
        <taxon>Prochlorococcaceae</taxon>
        <taxon>Prochlorococcus</taxon>
    </lineage>
</organism>
<protein>
    <recommendedName>
        <fullName evidence="1">Small ribosomal subunit biogenesis GTPase RsgA</fullName>
        <ecNumber evidence="1">3.6.1.-</ecNumber>
    </recommendedName>
</protein>
<accession>Q7VEJ4</accession>
<dbReference type="EC" id="3.6.1.-" evidence="1"/>
<dbReference type="EMBL" id="AE017126">
    <property type="protein sequence ID" value="AAP99065.1"/>
    <property type="molecule type" value="Genomic_DNA"/>
</dbReference>
<dbReference type="RefSeq" id="NP_874413.1">
    <property type="nucleotide sequence ID" value="NC_005042.1"/>
</dbReference>
<dbReference type="RefSeq" id="WP_011124174.1">
    <property type="nucleotide sequence ID" value="NC_005042.1"/>
</dbReference>
<dbReference type="SMR" id="Q7VEJ4"/>
<dbReference type="STRING" id="167539.Pro_0019"/>
<dbReference type="EnsemblBacteria" id="AAP99065">
    <property type="protein sequence ID" value="AAP99065"/>
    <property type="gene ID" value="Pro_0019"/>
</dbReference>
<dbReference type="KEGG" id="pma:Pro_0019"/>
<dbReference type="PATRIC" id="fig|167539.5.peg.19"/>
<dbReference type="eggNOG" id="COG1162">
    <property type="taxonomic scope" value="Bacteria"/>
</dbReference>
<dbReference type="HOGENOM" id="CLU_033617_2_1_3"/>
<dbReference type="OrthoDB" id="9809485at2"/>
<dbReference type="Proteomes" id="UP000001420">
    <property type="component" value="Chromosome"/>
</dbReference>
<dbReference type="GO" id="GO:0005737">
    <property type="term" value="C:cytoplasm"/>
    <property type="evidence" value="ECO:0007669"/>
    <property type="project" value="UniProtKB-SubCell"/>
</dbReference>
<dbReference type="GO" id="GO:0005525">
    <property type="term" value="F:GTP binding"/>
    <property type="evidence" value="ECO:0007669"/>
    <property type="project" value="UniProtKB-UniRule"/>
</dbReference>
<dbReference type="GO" id="GO:0003924">
    <property type="term" value="F:GTPase activity"/>
    <property type="evidence" value="ECO:0007669"/>
    <property type="project" value="UniProtKB-UniRule"/>
</dbReference>
<dbReference type="GO" id="GO:0046872">
    <property type="term" value="F:metal ion binding"/>
    <property type="evidence" value="ECO:0007669"/>
    <property type="project" value="UniProtKB-KW"/>
</dbReference>
<dbReference type="GO" id="GO:0019843">
    <property type="term" value="F:rRNA binding"/>
    <property type="evidence" value="ECO:0007669"/>
    <property type="project" value="UniProtKB-KW"/>
</dbReference>
<dbReference type="GO" id="GO:0042274">
    <property type="term" value="P:ribosomal small subunit biogenesis"/>
    <property type="evidence" value="ECO:0007669"/>
    <property type="project" value="UniProtKB-UniRule"/>
</dbReference>
<dbReference type="CDD" id="cd01854">
    <property type="entry name" value="YjeQ_EngC"/>
    <property type="match status" value="1"/>
</dbReference>
<dbReference type="Gene3D" id="3.40.50.300">
    <property type="entry name" value="P-loop containing nucleotide triphosphate hydrolases"/>
    <property type="match status" value="1"/>
</dbReference>
<dbReference type="Gene3D" id="1.10.40.50">
    <property type="entry name" value="Probable gtpase engc, domain 3"/>
    <property type="match status" value="1"/>
</dbReference>
<dbReference type="HAMAP" id="MF_01820">
    <property type="entry name" value="GTPase_RsgA"/>
    <property type="match status" value="1"/>
</dbReference>
<dbReference type="InterPro" id="IPR030378">
    <property type="entry name" value="G_CP_dom"/>
</dbReference>
<dbReference type="InterPro" id="IPR012340">
    <property type="entry name" value="NA-bd_OB-fold"/>
</dbReference>
<dbReference type="InterPro" id="IPR027417">
    <property type="entry name" value="P-loop_NTPase"/>
</dbReference>
<dbReference type="InterPro" id="IPR004881">
    <property type="entry name" value="Ribosome_biogen_GTPase_RsgA"/>
</dbReference>
<dbReference type="InterPro" id="IPR010914">
    <property type="entry name" value="RsgA_GTPase_dom"/>
</dbReference>
<dbReference type="NCBIfam" id="TIGR00157">
    <property type="entry name" value="ribosome small subunit-dependent GTPase A"/>
    <property type="match status" value="1"/>
</dbReference>
<dbReference type="PANTHER" id="PTHR32120">
    <property type="entry name" value="SMALL RIBOSOMAL SUBUNIT BIOGENESIS GTPASE RSGA"/>
    <property type="match status" value="1"/>
</dbReference>
<dbReference type="PANTHER" id="PTHR32120:SF11">
    <property type="entry name" value="SMALL RIBOSOMAL SUBUNIT BIOGENESIS GTPASE RSGA 1, MITOCHONDRIAL-RELATED"/>
    <property type="match status" value="1"/>
</dbReference>
<dbReference type="Pfam" id="PF03193">
    <property type="entry name" value="RsgA_GTPase"/>
    <property type="match status" value="1"/>
</dbReference>
<dbReference type="SUPFAM" id="SSF50249">
    <property type="entry name" value="Nucleic acid-binding proteins"/>
    <property type="match status" value="1"/>
</dbReference>
<dbReference type="SUPFAM" id="SSF52540">
    <property type="entry name" value="P-loop containing nucleoside triphosphate hydrolases"/>
    <property type="match status" value="1"/>
</dbReference>
<dbReference type="PROSITE" id="PS50936">
    <property type="entry name" value="ENGC_GTPASE"/>
    <property type="match status" value="1"/>
</dbReference>
<dbReference type="PROSITE" id="PS51721">
    <property type="entry name" value="G_CP"/>
    <property type="match status" value="1"/>
</dbReference>
<comment type="function">
    <text evidence="1">One of several proteins that assist in the late maturation steps of the functional core of the 30S ribosomal subunit. Helps release RbfA from mature subunits. May play a role in the assembly of ribosomal proteins into the subunit. Circularly permuted GTPase that catalyzes slow GTP hydrolysis, GTPase activity is stimulated by the 30S ribosomal subunit.</text>
</comment>
<comment type="cofactor">
    <cofactor evidence="1">
        <name>Zn(2+)</name>
        <dbReference type="ChEBI" id="CHEBI:29105"/>
    </cofactor>
    <text evidence="1">Binds 1 zinc ion per subunit.</text>
</comment>
<comment type="subunit">
    <text evidence="1">Monomer. Associates with 30S ribosomal subunit, binds 16S rRNA.</text>
</comment>
<comment type="subcellular location">
    <subcellularLocation>
        <location evidence="1">Cytoplasm</location>
    </subcellularLocation>
</comment>
<comment type="similarity">
    <text evidence="1">Belongs to the TRAFAC class YlqF/YawG GTPase family. RsgA subfamily.</text>
</comment>
<feature type="chain" id="PRO_0000171504" description="Small ribosomal subunit biogenesis GTPase RsgA">
    <location>
        <begin position="1"/>
        <end position="309"/>
    </location>
</feature>
<feature type="domain" description="CP-type G" evidence="2">
    <location>
        <begin position="88"/>
        <end position="247"/>
    </location>
</feature>
<feature type="binding site" evidence="1">
    <location>
        <begin position="137"/>
        <end position="140"/>
    </location>
    <ligand>
        <name>GTP</name>
        <dbReference type="ChEBI" id="CHEBI:37565"/>
    </ligand>
</feature>
<feature type="binding site" evidence="1">
    <location>
        <begin position="189"/>
        <end position="197"/>
    </location>
    <ligand>
        <name>GTP</name>
        <dbReference type="ChEBI" id="CHEBI:37565"/>
    </ligand>
</feature>
<feature type="binding site" evidence="1">
    <location>
        <position position="272"/>
    </location>
    <ligand>
        <name>Zn(2+)</name>
        <dbReference type="ChEBI" id="CHEBI:29105"/>
    </ligand>
</feature>
<feature type="binding site" evidence="1">
    <location>
        <position position="277"/>
    </location>
    <ligand>
        <name>Zn(2+)</name>
        <dbReference type="ChEBI" id="CHEBI:29105"/>
    </ligand>
</feature>
<feature type="binding site" evidence="1">
    <location>
        <position position="279"/>
    </location>
    <ligand>
        <name>Zn(2+)</name>
        <dbReference type="ChEBI" id="CHEBI:29105"/>
    </ligand>
</feature>
<feature type="binding site" evidence="1">
    <location>
        <position position="285"/>
    </location>
    <ligand>
        <name>Zn(2+)</name>
        <dbReference type="ChEBI" id="CHEBI:29105"/>
    </ligand>
</feature>